<reference key="1">
    <citation type="submission" date="2006-10" db="EMBL/GenBank/DDBJ databases">
        <title>Complete sequence of Methanosaeta thermophila PT.</title>
        <authorList>
            <consortium name="US DOE Joint Genome Institute"/>
            <person name="Copeland A."/>
            <person name="Lucas S."/>
            <person name="Lapidus A."/>
            <person name="Barry K."/>
            <person name="Detter J.C."/>
            <person name="Glavina del Rio T."/>
            <person name="Hammon N."/>
            <person name="Israni S."/>
            <person name="Pitluck S."/>
            <person name="Chain P."/>
            <person name="Malfatti S."/>
            <person name="Shin M."/>
            <person name="Vergez L."/>
            <person name="Schmutz J."/>
            <person name="Larimer F."/>
            <person name="Land M."/>
            <person name="Hauser L."/>
            <person name="Kyrpides N."/>
            <person name="Kim E."/>
            <person name="Smith K.S."/>
            <person name="Ingram-Smith C."/>
            <person name="Richardson P."/>
        </authorList>
    </citation>
    <scope>NUCLEOTIDE SEQUENCE [LARGE SCALE GENOMIC DNA]</scope>
    <source>
        <strain>DSM 6194 / JCM 14653 / NBRC 101360 / PT</strain>
    </source>
</reference>
<comment type="function">
    <text evidence="1">Catalyzes the decarboxylation of L-tyrosine to produce tyramine for methanofuran biosynthesis. Can also catalyze the decarboxylation of L-aspartate to produce beta-alanine for coenzyme A (CoA) biosynthesis.</text>
</comment>
<comment type="catalytic activity">
    <reaction evidence="1">
        <text>L-tyrosine + H(+) = tyramine + CO2</text>
        <dbReference type="Rhea" id="RHEA:14345"/>
        <dbReference type="ChEBI" id="CHEBI:15378"/>
        <dbReference type="ChEBI" id="CHEBI:16526"/>
        <dbReference type="ChEBI" id="CHEBI:58315"/>
        <dbReference type="ChEBI" id="CHEBI:327995"/>
        <dbReference type="EC" id="4.1.1.25"/>
    </reaction>
</comment>
<comment type="catalytic activity">
    <reaction evidence="1">
        <text>L-aspartate + H(+) = beta-alanine + CO2</text>
        <dbReference type="Rhea" id="RHEA:19497"/>
        <dbReference type="ChEBI" id="CHEBI:15378"/>
        <dbReference type="ChEBI" id="CHEBI:16526"/>
        <dbReference type="ChEBI" id="CHEBI:29991"/>
        <dbReference type="ChEBI" id="CHEBI:57966"/>
        <dbReference type="EC" id="4.1.1.11"/>
    </reaction>
</comment>
<comment type="cofactor">
    <cofactor evidence="1">
        <name>pyridoxal 5'-phosphate</name>
        <dbReference type="ChEBI" id="CHEBI:597326"/>
    </cofactor>
</comment>
<comment type="pathway">
    <text evidence="1">Cofactor biosynthesis; methanofuran biosynthesis.</text>
</comment>
<comment type="pathway">
    <text evidence="1">Cofactor biosynthesis; coenzyme A biosynthesis.</text>
</comment>
<comment type="similarity">
    <text evidence="1">Belongs to the group II decarboxylase family. MfnA subfamily.</text>
</comment>
<comment type="sequence caution" evidence="2">
    <conflict type="erroneous initiation">
        <sequence resource="EMBL-CDS" id="ABK15403"/>
    </conflict>
</comment>
<dbReference type="EC" id="4.1.1.11" evidence="1"/>
<dbReference type="EC" id="4.1.1.25" evidence="1"/>
<dbReference type="EMBL" id="CP000477">
    <property type="protein sequence ID" value="ABK15403.1"/>
    <property type="status" value="ALT_INIT"/>
    <property type="molecule type" value="Genomic_DNA"/>
</dbReference>
<dbReference type="SMR" id="A0B9M9"/>
<dbReference type="STRING" id="349307.Mthe_1636"/>
<dbReference type="KEGG" id="mtp:Mthe_1636"/>
<dbReference type="HOGENOM" id="CLU_028929_2_1_2"/>
<dbReference type="OrthoDB" id="56891at2157"/>
<dbReference type="UniPathway" id="UPA00080"/>
<dbReference type="UniPathway" id="UPA00241"/>
<dbReference type="Proteomes" id="UP000000674">
    <property type="component" value="Chromosome"/>
</dbReference>
<dbReference type="GO" id="GO:0004068">
    <property type="term" value="F:aspartate 1-decarboxylase activity"/>
    <property type="evidence" value="ECO:0007669"/>
    <property type="project" value="UniProtKB-UniRule"/>
</dbReference>
<dbReference type="GO" id="GO:0030170">
    <property type="term" value="F:pyridoxal phosphate binding"/>
    <property type="evidence" value="ECO:0007669"/>
    <property type="project" value="UniProtKB-UniRule"/>
</dbReference>
<dbReference type="GO" id="GO:0004837">
    <property type="term" value="F:tyrosine decarboxylase activity"/>
    <property type="evidence" value="ECO:0007669"/>
    <property type="project" value="UniProtKB-UniRule"/>
</dbReference>
<dbReference type="GO" id="GO:0019752">
    <property type="term" value="P:carboxylic acid metabolic process"/>
    <property type="evidence" value="ECO:0007669"/>
    <property type="project" value="InterPro"/>
</dbReference>
<dbReference type="GO" id="GO:0015937">
    <property type="term" value="P:coenzyme A biosynthetic process"/>
    <property type="evidence" value="ECO:0007669"/>
    <property type="project" value="UniProtKB-UniRule"/>
</dbReference>
<dbReference type="GO" id="GO:2001120">
    <property type="term" value="P:methanofuran biosynthetic process"/>
    <property type="evidence" value="ECO:0007669"/>
    <property type="project" value="UniProtKB-UniRule"/>
</dbReference>
<dbReference type="Gene3D" id="3.90.1150.10">
    <property type="entry name" value="Aspartate Aminotransferase, domain 1"/>
    <property type="match status" value="1"/>
</dbReference>
<dbReference type="Gene3D" id="3.40.640.10">
    <property type="entry name" value="Type I PLP-dependent aspartate aminotransferase-like (Major domain)"/>
    <property type="match status" value="1"/>
</dbReference>
<dbReference type="HAMAP" id="MF_01610">
    <property type="entry name" value="MfnA_decarbox"/>
    <property type="match status" value="1"/>
</dbReference>
<dbReference type="InterPro" id="IPR050477">
    <property type="entry name" value="GrpII_AminoAcid_Decarb"/>
</dbReference>
<dbReference type="InterPro" id="IPR020931">
    <property type="entry name" value="MfnA"/>
</dbReference>
<dbReference type="InterPro" id="IPR002129">
    <property type="entry name" value="PyrdxlP-dep_de-COase"/>
</dbReference>
<dbReference type="InterPro" id="IPR015424">
    <property type="entry name" value="PyrdxlP-dep_Trfase"/>
</dbReference>
<dbReference type="InterPro" id="IPR015421">
    <property type="entry name" value="PyrdxlP-dep_Trfase_major"/>
</dbReference>
<dbReference type="InterPro" id="IPR015422">
    <property type="entry name" value="PyrdxlP-dep_Trfase_small"/>
</dbReference>
<dbReference type="InterPro" id="IPR021115">
    <property type="entry name" value="Pyridoxal-P_BS"/>
</dbReference>
<dbReference type="NCBIfam" id="TIGR03812">
    <property type="entry name" value="tyr_de_CO2_Arch"/>
    <property type="match status" value="1"/>
</dbReference>
<dbReference type="PANTHER" id="PTHR42735">
    <property type="match status" value="1"/>
</dbReference>
<dbReference type="PANTHER" id="PTHR42735:SF6">
    <property type="entry name" value="SPHINGOSINE-1-PHOSPHATE LYASE 1"/>
    <property type="match status" value="1"/>
</dbReference>
<dbReference type="Pfam" id="PF00282">
    <property type="entry name" value="Pyridoxal_deC"/>
    <property type="match status" value="1"/>
</dbReference>
<dbReference type="SUPFAM" id="SSF53383">
    <property type="entry name" value="PLP-dependent transferases"/>
    <property type="match status" value="1"/>
</dbReference>
<dbReference type="PROSITE" id="PS00392">
    <property type="entry name" value="DDC_GAD_HDC_YDC"/>
    <property type="match status" value="1"/>
</dbReference>
<sequence length="383" mass="42137">MYTFPEKGLSEDMVTDLLKEMRSRDCPYDRLLSTMCTRPHPVAVRAYSMFLETNLGDPGLFPGTAEIERRVVGILGSLLGCSDATGYVSTGGTESNIQAVRAARNSSGRRDGNIVVPRSAHFSFDKIADLLNLEVRKAELDESLRVDVGDVERLIDDRTVCLVGIAGTTEFGQVDPIGDLSELAIENGIPLHVDAAFGGFVLPFLEKDCMWDFRAEGVQSITIDPHKMGMSPIPAGGLIFRSSDPLRRLETETYYLTVSRQASLTGTRSGAAAAATYAVIMHLGIDGYRKVVRRCMDMTEHLVSEARAMGIEPVIEPVMNVVALRVDDPPGVRRALLERGWHVSMTREPKALRLILMPHMTDENLDLFLSDLEDVLISLRRGG</sequence>
<accession>A0B9M9</accession>
<protein>
    <recommendedName>
        <fullName evidence="1">Probable L-tyrosine/L-aspartate decarboxylase</fullName>
        <shortName evidence="1">TDC/ADC</shortName>
        <ecNumber evidence="1">4.1.1.11</ecNumber>
        <ecNumber evidence="1">4.1.1.25</ecNumber>
    </recommendedName>
</protein>
<proteinExistence type="inferred from homology"/>
<evidence type="ECO:0000255" key="1">
    <source>
        <dbReference type="HAMAP-Rule" id="MF_01610"/>
    </source>
</evidence>
<evidence type="ECO:0000305" key="2"/>
<organism>
    <name type="scientific">Methanothrix thermoacetophila (strain DSM 6194 / JCM 14653 / NBRC 101360 / PT)</name>
    <name type="common">Methanosaeta thermophila</name>
    <dbReference type="NCBI Taxonomy" id="349307"/>
    <lineage>
        <taxon>Archaea</taxon>
        <taxon>Methanobacteriati</taxon>
        <taxon>Methanobacteriota</taxon>
        <taxon>Stenosarchaea group</taxon>
        <taxon>Methanomicrobia</taxon>
        <taxon>Methanotrichales</taxon>
        <taxon>Methanotrichaceae</taxon>
        <taxon>Methanothrix</taxon>
    </lineage>
</organism>
<feature type="chain" id="PRO_0000293186" description="Probable L-tyrosine/L-aspartate decarboxylase">
    <location>
        <begin position="1"/>
        <end position="383"/>
    </location>
</feature>
<feature type="modified residue" description="N6-(pyridoxal phosphate)lysine" evidence="1">
    <location>
        <position position="227"/>
    </location>
</feature>
<keyword id="KW-0210">Decarboxylase</keyword>
<keyword id="KW-0456">Lyase</keyword>
<keyword id="KW-0663">Pyridoxal phosphate</keyword>
<keyword id="KW-1185">Reference proteome</keyword>
<name>MFNA_METTP</name>
<gene>
    <name evidence="1" type="primary">mfnA</name>
    <name type="ordered locus">Mthe_1636</name>
</gene>